<accession>A9MFQ6</accession>
<proteinExistence type="inferred from homology"/>
<comment type="function">
    <text evidence="1">With EpmB is involved in the beta-lysylation step of the post-translational modification of translation elongation factor P (EF-P) on 'Lys-34'. Catalyzes the ATP-dependent activation of (R)-beta-lysine produced by EpmB, forming a lysyl-adenylate, from which the beta-lysyl moiety is then transferred to the epsilon-amino group of EF-P 'Lys-34'.</text>
</comment>
<comment type="catalytic activity">
    <reaction evidence="1">
        <text>D-beta-lysine + L-lysyl-[protein] + ATP = N(6)-((3R)-3,6-diaminohexanoyl)-L-lysyl-[protein] + AMP + diphosphate + H(+)</text>
        <dbReference type="Rhea" id="RHEA:83435"/>
        <dbReference type="Rhea" id="RHEA-COMP:9752"/>
        <dbReference type="Rhea" id="RHEA-COMP:20131"/>
        <dbReference type="ChEBI" id="CHEBI:15378"/>
        <dbReference type="ChEBI" id="CHEBI:29969"/>
        <dbReference type="ChEBI" id="CHEBI:30616"/>
        <dbReference type="ChEBI" id="CHEBI:33019"/>
        <dbReference type="ChEBI" id="CHEBI:84138"/>
        <dbReference type="ChEBI" id="CHEBI:156053"/>
        <dbReference type="ChEBI" id="CHEBI:456215"/>
    </reaction>
    <physiologicalReaction direction="left-to-right" evidence="1">
        <dbReference type="Rhea" id="RHEA:83436"/>
    </physiologicalReaction>
</comment>
<comment type="subunit">
    <text evidence="1">Homodimer.</text>
</comment>
<comment type="similarity">
    <text evidence="1">Belongs to the class-II aminoacyl-tRNA synthetase family. EpmA subfamily.</text>
</comment>
<gene>
    <name evidence="1" type="primary">epmA</name>
    <name type="synonym">yjeA</name>
    <name type="ordered locus">SARI_03289</name>
</gene>
<evidence type="ECO:0000255" key="1">
    <source>
        <dbReference type="HAMAP-Rule" id="MF_00174"/>
    </source>
</evidence>
<feature type="chain" id="PRO_1000077140" description="Elongation factor P--(R)-beta-lysine ligase">
    <location>
        <begin position="1"/>
        <end position="325"/>
    </location>
</feature>
<feature type="binding site" evidence="1">
    <location>
        <begin position="76"/>
        <end position="78"/>
    </location>
    <ligand>
        <name>substrate</name>
    </ligand>
</feature>
<feature type="binding site" evidence="1">
    <location>
        <begin position="100"/>
        <end position="102"/>
    </location>
    <ligand>
        <name>ATP</name>
        <dbReference type="ChEBI" id="CHEBI:30616"/>
    </ligand>
</feature>
<feature type="binding site" evidence="1">
    <location>
        <position position="109"/>
    </location>
    <ligand>
        <name>ATP</name>
        <dbReference type="ChEBI" id="CHEBI:30616"/>
    </ligand>
</feature>
<feature type="binding site" evidence="1">
    <location>
        <position position="118"/>
    </location>
    <ligand>
        <name>substrate</name>
    </ligand>
</feature>
<feature type="binding site" evidence="1">
    <location>
        <begin position="244"/>
        <end position="245"/>
    </location>
    <ligand>
        <name>ATP</name>
        <dbReference type="ChEBI" id="CHEBI:30616"/>
    </ligand>
</feature>
<feature type="binding site" evidence="1">
    <location>
        <position position="251"/>
    </location>
    <ligand>
        <name>substrate</name>
    </ligand>
</feature>
<feature type="binding site" evidence="1">
    <location>
        <position position="300"/>
    </location>
    <ligand>
        <name>ATP</name>
        <dbReference type="ChEBI" id="CHEBI:30616"/>
    </ligand>
</feature>
<keyword id="KW-0067">ATP-binding</keyword>
<keyword id="KW-0436">Ligase</keyword>
<keyword id="KW-0547">Nucleotide-binding</keyword>
<keyword id="KW-1185">Reference proteome</keyword>
<organism>
    <name type="scientific">Salmonella arizonae (strain ATCC BAA-731 / CDC346-86 / RSK2980)</name>
    <dbReference type="NCBI Taxonomy" id="41514"/>
    <lineage>
        <taxon>Bacteria</taxon>
        <taxon>Pseudomonadati</taxon>
        <taxon>Pseudomonadota</taxon>
        <taxon>Gammaproteobacteria</taxon>
        <taxon>Enterobacterales</taxon>
        <taxon>Enterobacteriaceae</taxon>
        <taxon>Salmonella</taxon>
    </lineage>
</organism>
<dbReference type="EC" id="6.3.2.-" evidence="1"/>
<dbReference type="EMBL" id="CP000880">
    <property type="protein sequence ID" value="ABX23122.1"/>
    <property type="molecule type" value="Genomic_DNA"/>
</dbReference>
<dbReference type="SMR" id="A9MFQ6"/>
<dbReference type="STRING" id="41514.SARI_03289"/>
<dbReference type="KEGG" id="ses:SARI_03289"/>
<dbReference type="HOGENOM" id="CLU_008255_1_1_6"/>
<dbReference type="Proteomes" id="UP000002084">
    <property type="component" value="Chromosome"/>
</dbReference>
<dbReference type="GO" id="GO:0005829">
    <property type="term" value="C:cytosol"/>
    <property type="evidence" value="ECO:0007669"/>
    <property type="project" value="TreeGrafter"/>
</dbReference>
<dbReference type="GO" id="GO:0016880">
    <property type="term" value="F:acid-ammonia (or amide) ligase activity"/>
    <property type="evidence" value="ECO:0007669"/>
    <property type="project" value="UniProtKB-UniRule"/>
</dbReference>
<dbReference type="GO" id="GO:0005524">
    <property type="term" value="F:ATP binding"/>
    <property type="evidence" value="ECO:0007669"/>
    <property type="project" value="UniProtKB-UniRule"/>
</dbReference>
<dbReference type="GO" id="GO:0004824">
    <property type="term" value="F:lysine-tRNA ligase activity"/>
    <property type="evidence" value="ECO:0007669"/>
    <property type="project" value="InterPro"/>
</dbReference>
<dbReference type="GO" id="GO:0000049">
    <property type="term" value="F:tRNA binding"/>
    <property type="evidence" value="ECO:0007669"/>
    <property type="project" value="TreeGrafter"/>
</dbReference>
<dbReference type="GO" id="GO:0006430">
    <property type="term" value="P:lysyl-tRNA aminoacylation"/>
    <property type="evidence" value="ECO:0007669"/>
    <property type="project" value="InterPro"/>
</dbReference>
<dbReference type="FunFam" id="3.30.930.10:FF:000017">
    <property type="entry name" value="Elongation factor P--(R)-beta-lysine ligase"/>
    <property type="match status" value="1"/>
</dbReference>
<dbReference type="Gene3D" id="3.30.930.10">
    <property type="entry name" value="Bira Bifunctional Protein, Domain 2"/>
    <property type="match status" value="1"/>
</dbReference>
<dbReference type="HAMAP" id="MF_00174">
    <property type="entry name" value="EF_P_modif_A"/>
    <property type="match status" value="1"/>
</dbReference>
<dbReference type="InterPro" id="IPR004364">
    <property type="entry name" value="Aa-tRNA-synt_II"/>
</dbReference>
<dbReference type="InterPro" id="IPR006195">
    <property type="entry name" value="aa-tRNA-synth_II"/>
</dbReference>
<dbReference type="InterPro" id="IPR045864">
    <property type="entry name" value="aa-tRNA-synth_II/BPL/LPL"/>
</dbReference>
<dbReference type="InterPro" id="IPR004525">
    <property type="entry name" value="EpmA"/>
</dbReference>
<dbReference type="InterPro" id="IPR018149">
    <property type="entry name" value="Lys-tRNA-synth_II_C"/>
</dbReference>
<dbReference type="NCBIfam" id="TIGR00462">
    <property type="entry name" value="genX"/>
    <property type="match status" value="1"/>
</dbReference>
<dbReference type="NCBIfam" id="NF006828">
    <property type="entry name" value="PRK09350.1"/>
    <property type="match status" value="1"/>
</dbReference>
<dbReference type="PANTHER" id="PTHR42918:SF6">
    <property type="entry name" value="ELONGATION FACTOR P--(R)-BETA-LYSINE LIGASE"/>
    <property type="match status" value="1"/>
</dbReference>
<dbReference type="PANTHER" id="PTHR42918">
    <property type="entry name" value="LYSYL-TRNA SYNTHETASE"/>
    <property type="match status" value="1"/>
</dbReference>
<dbReference type="Pfam" id="PF00152">
    <property type="entry name" value="tRNA-synt_2"/>
    <property type="match status" value="1"/>
</dbReference>
<dbReference type="PRINTS" id="PR00982">
    <property type="entry name" value="TRNASYNTHLYS"/>
</dbReference>
<dbReference type="SUPFAM" id="SSF55681">
    <property type="entry name" value="Class II aaRS and biotin synthetases"/>
    <property type="match status" value="1"/>
</dbReference>
<dbReference type="PROSITE" id="PS50862">
    <property type="entry name" value="AA_TRNA_LIGASE_II"/>
    <property type="match status" value="1"/>
</dbReference>
<reference key="1">
    <citation type="submission" date="2007-11" db="EMBL/GenBank/DDBJ databases">
        <authorList>
            <consortium name="The Salmonella enterica serovar Arizonae Genome Sequencing Project"/>
            <person name="McClelland M."/>
            <person name="Sanderson E.K."/>
            <person name="Porwollik S."/>
            <person name="Spieth J."/>
            <person name="Clifton W.S."/>
            <person name="Fulton R."/>
            <person name="Chunyan W."/>
            <person name="Wollam A."/>
            <person name="Shah N."/>
            <person name="Pepin K."/>
            <person name="Bhonagiri V."/>
            <person name="Nash W."/>
            <person name="Johnson M."/>
            <person name="Thiruvilangam P."/>
            <person name="Wilson R."/>
        </authorList>
    </citation>
    <scope>NUCLEOTIDE SEQUENCE [LARGE SCALE GENOMIC DNA]</scope>
    <source>
        <strain>ATCC BAA-731 / CDC346-86 / RSK2980</strain>
    </source>
</reference>
<name>EPMA_SALAR</name>
<sequence>MSETATWQPSASVPNLLKRAAIMTEIRRFFADRGVLEVETPCMSQATVTDIHLFPFETRFVGPGHSQGMNLYLMTSPEYHMKRLLAAGCGPVFQLCRSFRNEEMGRYHNPEFTMLEWYRPHYDMYRLMNEVDDLLQQVLDCQPAESLSYQQAFQRHLEIDPLSADKTQLREAAAKLDVSNIADTEEDRDTLLQLLFTVGVEPHIGKEKPTFIYHFPASQASLAQISTEDHRVAERFEVYYKGIELANGFHELTDAREQQQRFEQDNRKRAARGLPQQPIDNHLLDALKAGMPDCSGVALGVDRLVMLALGAERLADVIAFTVDRA</sequence>
<protein>
    <recommendedName>
        <fullName evidence="1">Elongation factor P--(R)-beta-lysine ligase</fullName>
        <shortName evidence="1">EF-P--(R)-beta-lysine ligase</shortName>
        <ecNumber evidence="1">6.3.2.-</ecNumber>
    </recommendedName>
    <alternativeName>
        <fullName evidence="1">EF-P post-translational modification enzyme A</fullName>
    </alternativeName>
    <alternativeName>
        <fullName evidence="1">EF-P-lysine lysyltransferase</fullName>
    </alternativeName>
</protein>